<protein>
    <recommendedName>
        <fullName evidence="1">Probable cyclic pyranopterin monophosphate synthase</fullName>
        <ecNumber evidence="1">4.6.1.17</ecNumber>
    </recommendedName>
    <alternativeName>
        <fullName evidence="1">Molybdenum cofactor biosynthesis protein C</fullName>
    </alternativeName>
</protein>
<comment type="function">
    <text evidence="1">Catalyzes the conversion of (8S)-3',8-cyclo-7,8-dihydroguanosine 5'-triphosphate to cyclic pyranopterin monophosphate (cPMP).</text>
</comment>
<comment type="catalytic activity">
    <reaction evidence="1">
        <text>(8S)-3',8-cyclo-7,8-dihydroguanosine 5'-triphosphate = cyclic pyranopterin phosphate + diphosphate</text>
        <dbReference type="Rhea" id="RHEA:49580"/>
        <dbReference type="ChEBI" id="CHEBI:33019"/>
        <dbReference type="ChEBI" id="CHEBI:59648"/>
        <dbReference type="ChEBI" id="CHEBI:131766"/>
        <dbReference type="EC" id="4.6.1.17"/>
    </reaction>
</comment>
<comment type="pathway">
    <text evidence="1">Cofactor biosynthesis; molybdopterin biosynthesis.</text>
</comment>
<comment type="subunit">
    <text evidence="1">Homohexamer; trimer of dimers.</text>
</comment>
<comment type="similarity">
    <text evidence="1">Belongs to the MoaC family.</text>
</comment>
<gene>
    <name evidence="1" type="primary">moaC</name>
    <name type="ordered locus">Mhun_2278</name>
</gene>
<sequence>MPVFTHLDDDRARMVDVSAKGEVYRKAVATGTITLRPDTLSAIRDGTVVKGNVLATARVAATLAIKDTPRLIPMCHAIPVHGIDITFDYTKTGITATVTVISAGKTGVEMEALVGVSTALLTIWDMVKSAEKDEKGQYPVTGISDIRVLEKVKQDL</sequence>
<dbReference type="EC" id="4.6.1.17" evidence="1"/>
<dbReference type="EMBL" id="CP000254">
    <property type="protein sequence ID" value="ABD41983.1"/>
    <property type="molecule type" value="Genomic_DNA"/>
</dbReference>
<dbReference type="RefSeq" id="WP_011449241.1">
    <property type="nucleotide sequence ID" value="NC_007796.1"/>
</dbReference>
<dbReference type="SMR" id="Q2FT56"/>
<dbReference type="FunCoup" id="Q2FT56">
    <property type="interactions" value="94"/>
</dbReference>
<dbReference type="STRING" id="323259.Mhun_2278"/>
<dbReference type="EnsemblBacteria" id="ABD41983">
    <property type="protein sequence ID" value="ABD41983"/>
    <property type="gene ID" value="Mhun_2278"/>
</dbReference>
<dbReference type="GeneID" id="3925113"/>
<dbReference type="KEGG" id="mhu:Mhun_2278"/>
<dbReference type="eggNOG" id="arCOG01530">
    <property type="taxonomic scope" value="Archaea"/>
</dbReference>
<dbReference type="HOGENOM" id="CLU_074693_1_2_2"/>
<dbReference type="InParanoid" id="Q2FT56"/>
<dbReference type="OrthoDB" id="10067at2157"/>
<dbReference type="UniPathway" id="UPA00344"/>
<dbReference type="Proteomes" id="UP000001941">
    <property type="component" value="Chromosome"/>
</dbReference>
<dbReference type="GO" id="GO:0061799">
    <property type="term" value="F:cyclic pyranopterin monophosphate synthase activity"/>
    <property type="evidence" value="ECO:0007669"/>
    <property type="project" value="UniProtKB-UniRule"/>
</dbReference>
<dbReference type="GO" id="GO:0006777">
    <property type="term" value="P:Mo-molybdopterin cofactor biosynthetic process"/>
    <property type="evidence" value="ECO:0007669"/>
    <property type="project" value="UniProtKB-UniRule"/>
</dbReference>
<dbReference type="CDD" id="cd01419">
    <property type="entry name" value="MoaC_A"/>
    <property type="match status" value="1"/>
</dbReference>
<dbReference type="Gene3D" id="3.30.70.640">
    <property type="entry name" value="Molybdopterin cofactor biosynthesis C (MoaC) domain"/>
    <property type="match status" value="1"/>
</dbReference>
<dbReference type="HAMAP" id="MF_01224_A">
    <property type="entry name" value="MoaC_A"/>
    <property type="match status" value="1"/>
</dbReference>
<dbReference type="InterPro" id="IPR023047">
    <property type="entry name" value="Mo_CF_biosynth-C_arc"/>
</dbReference>
<dbReference type="InterPro" id="IPR023045">
    <property type="entry name" value="MoaC"/>
</dbReference>
<dbReference type="InterPro" id="IPR036522">
    <property type="entry name" value="MoaC_sf"/>
</dbReference>
<dbReference type="InterPro" id="IPR002820">
    <property type="entry name" value="Mopterin_CF_biosynth-C_dom"/>
</dbReference>
<dbReference type="NCBIfam" id="TIGR00581">
    <property type="entry name" value="moaC"/>
    <property type="match status" value="1"/>
</dbReference>
<dbReference type="NCBIfam" id="NF008999">
    <property type="entry name" value="PRK12343.1"/>
    <property type="match status" value="1"/>
</dbReference>
<dbReference type="Pfam" id="PF01967">
    <property type="entry name" value="MoaC"/>
    <property type="match status" value="1"/>
</dbReference>
<dbReference type="SUPFAM" id="SSF55040">
    <property type="entry name" value="Molybdenum cofactor biosynthesis protein C, MoaC"/>
    <property type="match status" value="1"/>
</dbReference>
<evidence type="ECO:0000255" key="1">
    <source>
        <dbReference type="HAMAP-Rule" id="MF_01224"/>
    </source>
</evidence>
<accession>Q2FT56</accession>
<organism>
    <name type="scientific">Methanospirillum hungatei JF-1 (strain ATCC 27890 / DSM 864 / NBRC 100397 / JF-1)</name>
    <dbReference type="NCBI Taxonomy" id="323259"/>
    <lineage>
        <taxon>Archaea</taxon>
        <taxon>Methanobacteriati</taxon>
        <taxon>Methanobacteriota</taxon>
        <taxon>Stenosarchaea group</taxon>
        <taxon>Methanomicrobia</taxon>
        <taxon>Methanomicrobiales</taxon>
        <taxon>Methanospirillaceae</taxon>
        <taxon>Methanospirillum</taxon>
    </lineage>
</organism>
<name>MOAC_METHJ</name>
<reference key="1">
    <citation type="journal article" date="2016" name="Stand. Genomic Sci.">
        <title>Complete genome sequence of Methanospirillum hungatei type strain JF1.</title>
        <authorList>
            <person name="Gunsalus R.P."/>
            <person name="Cook L.E."/>
            <person name="Crable B."/>
            <person name="Rohlin L."/>
            <person name="McDonald E."/>
            <person name="Mouttaki H."/>
            <person name="Sieber J.R."/>
            <person name="Poweleit N."/>
            <person name="Zhou H."/>
            <person name="Lapidus A.L."/>
            <person name="Daligault H.E."/>
            <person name="Land M."/>
            <person name="Gilna P."/>
            <person name="Ivanova N."/>
            <person name="Kyrpides N."/>
            <person name="Culley D.E."/>
            <person name="McInerney M.J."/>
        </authorList>
    </citation>
    <scope>NUCLEOTIDE SEQUENCE [LARGE SCALE GENOMIC DNA]</scope>
    <source>
        <strain>ATCC 27890 / DSM 864 / NBRC 100397 / JF-1</strain>
    </source>
</reference>
<feature type="chain" id="PRO_1000054112" description="Probable cyclic pyranopterin monophosphate synthase">
    <location>
        <begin position="1"/>
        <end position="156"/>
    </location>
</feature>
<feature type="active site" evidence="1">
    <location>
        <position position="125"/>
    </location>
</feature>
<feature type="binding site" evidence="1">
    <location>
        <begin position="74"/>
        <end position="76"/>
    </location>
    <ligand>
        <name>substrate</name>
    </ligand>
</feature>
<feature type="binding site" evidence="1">
    <location>
        <begin position="110"/>
        <end position="111"/>
    </location>
    <ligand>
        <name>substrate</name>
    </ligand>
</feature>
<keyword id="KW-0456">Lyase</keyword>
<keyword id="KW-0501">Molybdenum cofactor biosynthesis</keyword>
<keyword id="KW-1185">Reference proteome</keyword>
<proteinExistence type="inferred from homology"/>